<evidence type="ECO:0000255" key="1">
    <source>
        <dbReference type="HAMAP-Rule" id="MF_00227"/>
    </source>
</evidence>
<feature type="chain" id="PRO_1000204340" description="Ribonuclease P protein component">
    <location>
        <begin position="1"/>
        <end position="114"/>
    </location>
</feature>
<name>RNPA_CLOD6</name>
<gene>
    <name evidence="1" type="primary">rnpA</name>
    <name type="ordered locus">CD630_36790</name>
</gene>
<proteinExistence type="inferred from homology"/>
<reference key="1">
    <citation type="journal article" date="2006" name="Nat. Genet.">
        <title>The multidrug-resistant human pathogen Clostridium difficile has a highly mobile, mosaic genome.</title>
        <authorList>
            <person name="Sebaihia M."/>
            <person name="Wren B.W."/>
            <person name="Mullany P."/>
            <person name="Fairweather N.F."/>
            <person name="Minton N."/>
            <person name="Stabler R."/>
            <person name="Thomson N.R."/>
            <person name="Roberts A.P."/>
            <person name="Cerdeno-Tarraga A.M."/>
            <person name="Wang H."/>
            <person name="Holden M.T.G."/>
            <person name="Wright A."/>
            <person name="Churcher C."/>
            <person name="Quail M.A."/>
            <person name="Baker S."/>
            <person name="Bason N."/>
            <person name="Brooks K."/>
            <person name="Chillingworth T."/>
            <person name="Cronin A."/>
            <person name="Davis P."/>
            <person name="Dowd L."/>
            <person name="Fraser A."/>
            <person name="Feltwell T."/>
            <person name="Hance Z."/>
            <person name="Holroyd S."/>
            <person name="Jagels K."/>
            <person name="Moule S."/>
            <person name="Mungall K."/>
            <person name="Price C."/>
            <person name="Rabbinowitsch E."/>
            <person name="Sharp S."/>
            <person name="Simmonds M."/>
            <person name="Stevens K."/>
            <person name="Unwin L."/>
            <person name="Whithead S."/>
            <person name="Dupuy B."/>
            <person name="Dougan G."/>
            <person name="Barrell B."/>
            <person name="Parkhill J."/>
        </authorList>
    </citation>
    <scope>NUCLEOTIDE SEQUENCE [LARGE SCALE GENOMIC DNA]</scope>
    <source>
        <strain>630</strain>
    </source>
</reference>
<accession>Q181T2</accession>
<organism>
    <name type="scientific">Clostridioides difficile (strain 630)</name>
    <name type="common">Peptoclostridium difficile</name>
    <dbReference type="NCBI Taxonomy" id="272563"/>
    <lineage>
        <taxon>Bacteria</taxon>
        <taxon>Bacillati</taxon>
        <taxon>Bacillota</taxon>
        <taxon>Clostridia</taxon>
        <taxon>Peptostreptococcales</taxon>
        <taxon>Peptostreptococcaceae</taxon>
        <taxon>Clostridioides</taxon>
    </lineage>
</organism>
<keyword id="KW-0255">Endonuclease</keyword>
<keyword id="KW-0378">Hydrolase</keyword>
<keyword id="KW-0540">Nuclease</keyword>
<keyword id="KW-1185">Reference proteome</keyword>
<keyword id="KW-0694">RNA-binding</keyword>
<keyword id="KW-0819">tRNA processing</keyword>
<protein>
    <recommendedName>
        <fullName evidence="1">Ribonuclease P protein component</fullName>
        <shortName evidence="1">RNase P protein</shortName>
        <shortName evidence="1">RNaseP protein</shortName>
        <ecNumber evidence="1">3.1.26.5</ecNumber>
    </recommendedName>
    <alternativeName>
        <fullName evidence="1">Protein C5</fullName>
    </alternativeName>
</protein>
<sequence length="114" mass="13276">MDFNRTKGLKKDSDFRKVYKHGKSFANKYLVIYILKNKSDYSRVGISVSKKVGKAITRNRVRRLIKEAYRLNIDEKIKPGYDIVFIARVSSKDATFKDIDKSIKNLVKRTDISI</sequence>
<comment type="function">
    <text evidence="1">RNaseP catalyzes the removal of the 5'-leader sequence from pre-tRNA to produce the mature 5'-terminus. It can also cleave other RNA substrates such as 4.5S RNA. The protein component plays an auxiliary but essential role in vivo by binding to the 5'-leader sequence and broadening the substrate specificity of the ribozyme.</text>
</comment>
<comment type="catalytic activity">
    <reaction evidence="1">
        <text>Endonucleolytic cleavage of RNA, removing 5'-extranucleotides from tRNA precursor.</text>
        <dbReference type="EC" id="3.1.26.5"/>
    </reaction>
</comment>
<comment type="subunit">
    <text evidence="1">Consists of a catalytic RNA component (M1 or rnpB) and a protein subunit.</text>
</comment>
<comment type="similarity">
    <text evidence="1">Belongs to the RnpA family.</text>
</comment>
<dbReference type="EC" id="3.1.26.5" evidence="1"/>
<dbReference type="EMBL" id="AM180355">
    <property type="protein sequence ID" value="CAJ70589.1"/>
    <property type="molecule type" value="Genomic_DNA"/>
</dbReference>
<dbReference type="RefSeq" id="WP_003429302.1">
    <property type="nucleotide sequence ID" value="NZ_JAUPES010000007.1"/>
</dbReference>
<dbReference type="RefSeq" id="YP_001090204.1">
    <property type="nucleotide sequence ID" value="NC_009089.1"/>
</dbReference>
<dbReference type="SMR" id="Q181T2"/>
<dbReference type="STRING" id="272563.CD630_36790"/>
<dbReference type="EnsemblBacteria" id="CAJ70589">
    <property type="protein sequence ID" value="CAJ70589"/>
    <property type="gene ID" value="CD630_36790"/>
</dbReference>
<dbReference type="GeneID" id="66356152"/>
<dbReference type="KEGG" id="cdf:CD630_36790"/>
<dbReference type="KEGG" id="pdc:CDIF630_04010"/>
<dbReference type="PATRIC" id="fig|272563.120.peg.3892"/>
<dbReference type="eggNOG" id="COG0594">
    <property type="taxonomic scope" value="Bacteria"/>
</dbReference>
<dbReference type="OrthoDB" id="9810867at2"/>
<dbReference type="PhylomeDB" id="Q181T2"/>
<dbReference type="BioCyc" id="PDIF272563:G12WB-3872-MONOMER"/>
<dbReference type="Proteomes" id="UP000001978">
    <property type="component" value="Chromosome"/>
</dbReference>
<dbReference type="GO" id="GO:0030677">
    <property type="term" value="C:ribonuclease P complex"/>
    <property type="evidence" value="ECO:0007669"/>
    <property type="project" value="TreeGrafter"/>
</dbReference>
<dbReference type="GO" id="GO:0042781">
    <property type="term" value="F:3'-tRNA processing endoribonuclease activity"/>
    <property type="evidence" value="ECO:0007669"/>
    <property type="project" value="TreeGrafter"/>
</dbReference>
<dbReference type="GO" id="GO:0004526">
    <property type="term" value="F:ribonuclease P activity"/>
    <property type="evidence" value="ECO:0007669"/>
    <property type="project" value="UniProtKB-UniRule"/>
</dbReference>
<dbReference type="GO" id="GO:0000049">
    <property type="term" value="F:tRNA binding"/>
    <property type="evidence" value="ECO:0007669"/>
    <property type="project" value="UniProtKB-UniRule"/>
</dbReference>
<dbReference type="GO" id="GO:0001682">
    <property type="term" value="P:tRNA 5'-leader removal"/>
    <property type="evidence" value="ECO:0007669"/>
    <property type="project" value="UniProtKB-UniRule"/>
</dbReference>
<dbReference type="Gene3D" id="3.30.230.10">
    <property type="match status" value="1"/>
</dbReference>
<dbReference type="HAMAP" id="MF_00227">
    <property type="entry name" value="RNase_P"/>
    <property type="match status" value="1"/>
</dbReference>
<dbReference type="InterPro" id="IPR020568">
    <property type="entry name" value="Ribosomal_Su5_D2-typ_SF"/>
</dbReference>
<dbReference type="InterPro" id="IPR014721">
    <property type="entry name" value="Ribsml_uS5_D2-typ_fold_subgr"/>
</dbReference>
<dbReference type="InterPro" id="IPR000100">
    <property type="entry name" value="RNase_P"/>
</dbReference>
<dbReference type="InterPro" id="IPR020539">
    <property type="entry name" value="RNase_P_CS"/>
</dbReference>
<dbReference type="NCBIfam" id="TIGR00188">
    <property type="entry name" value="rnpA"/>
    <property type="match status" value="1"/>
</dbReference>
<dbReference type="PANTHER" id="PTHR33992">
    <property type="entry name" value="RIBONUCLEASE P PROTEIN COMPONENT"/>
    <property type="match status" value="1"/>
</dbReference>
<dbReference type="PANTHER" id="PTHR33992:SF1">
    <property type="entry name" value="RIBONUCLEASE P PROTEIN COMPONENT"/>
    <property type="match status" value="1"/>
</dbReference>
<dbReference type="Pfam" id="PF00825">
    <property type="entry name" value="Ribonuclease_P"/>
    <property type="match status" value="1"/>
</dbReference>
<dbReference type="SUPFAM" id="SSF54211">
    <property type="entry name" value="Ribosomal protein S5 domain 2-like"/>
    <property type="match status" value="1"/>
</dbReference>
<dbReference type="PROSITE" id="PS00648">
    <property type="entry name" value="RIBONUCLEASE_P"/>
    <property type="match status" value="1"/>
</dbReference>